<evidence type="ECO:0000250" key="1">
    <source>
        <dbReference type="UniProtKB" id="O76927"/>
    </source>
</evidence>
<evidence type="ECO:0000250" key="2">
    <source>
        <dbReference type="UniProtKB" id="P63220"/>
    </source>
</evidence>
<evidence type="ECO:0000250" key="3">
    <source>
        <dbReference type="UniProtKB" id="P63221"/>
    </source>
</evidence>
<evidence type="ECO:0000305" key="4"/>
<comment type="subunit">
    <text evidence="1">Component of the 40S small ribosomal subunit.</text>
</comment>
<comment type="subcellular location">
    <subcellularLocation>
        <location evidence="2">Cytoplasm</location>
        <location evidence="2">Cytosol</location>
    </subcellularLocation>
    <subcellularLocation>
        <location evidence="2">Cytoplasm</location>
    </subcellularLocation>
    <subcellularLocation>
        <location evidence="3">Rough endoplasmic reticulum</location>
    </subcellularLocation>
    <text evidence="2 3">Detected on cytosolic polysomes (By similarity). Detected in ribosomes that are associated with the rough endoplasmic reticulum (By similarity).</text>
</comment>
<comment type="similarity">
    <text evidence="4">Belongs to the eukaryotic ribosomal protein eS21 family.</text>
</comment>
<dbReference type="EMBL" id="AM048980">
    <property type="protein sequence ID" value="CAJ17214.1"/>
    <property type="molecule type" value="mRNA"/>
</dbReference>
<dbReference type="SMR" id="Q4GXP3"/>
<dbReference type="GO" id="GO:0005829">
    <property type="term" value="C:cytosol"/>
    <property type="evidence" value="ECO:0007669"/>
    <property type="project" value="UniProtKB-SubCell"/>
</dbReference>
<dbReference type="GO" id="GO:1990904">
    <property type="term" value="C:ribonucleoprotein complex"/>
    <property type="evidence" value="ECO:0007669"/>
    <property type="project" value="UniProtKB-KW"/>
</dbReference>
<dbReference type="GO" id="GO:0005840">
    <property type="term" value="C:ribosome"/>
    <property type="evidence" value="ECO:0007669"/>
    <property type="project" value="UniProtKB-KW"/>
</dbReference>
<dbReference type="GO" id="GO:0005791">
    <property type="term" value="C:rough endoplasmic reticulum"/>
    <property type="evidence" value="ECO:0007669"/>
    <property type="project" value="UniProtKB-SubCell"/>
</dbReference>
<dbReference type="GO" id="GO:0003735">
    <property type="term" value="F:structural constituent of ribosome"/>
    <property type="evidence" value="ECO:0007669"/>
    <property type="project" value="InterPro"/>
</dbReference>
<dbReference type="GO" id="GO:0006412">
    <property type="term" value="P:translation"/>
    <property type="evidence" value="ECO:0007669"/>
    <property type="project" value="InterPro"/>
</dbReference>
<dbReference type="FunFam" id="3.30.1230.20:FF:000001">
    <property type="entry name" value="40S ribosomal protein S21"/>
    <property type="match status" value="1"/>
</dbReference>
<dbReference type="Gene3D" id="3.30.1230.20">
    <property type="match status" value="1"/>
</dbReference>
<dbReference type="InterPro" id="IPR001931">
    <property type="entry name" value="Ribosomal_eS21"/>
</dbReference>
<dbReference type="InterPro" id="IPR018279">
    <property type="entry name" value="Ribosomal_eS21_CS"/>
</dbReference>
<dbReference type="InterPro" id="IPR038579">
    <property type="entry name" value="Ribosomal_eS21_sf"/>
</dbReference>
<dbReference type="PANTHER" id="PTHR10442">
    <property type="entry name" value="40S RIBOSOMAL PROTEIN S21"/>
    <property type="match status" value="1"/>
</dbReference>
<dbReference type="Pfam" id="PF01249">
    <property type="entry name" value="Ribosomal_S21e"/>
    <property type="match status" value="1"/>
</dbReference>
<dbReference type="PIRSF" id="PIRSF002148">
    <property type="entry name" value="Ribosomal_S21e"/>
    <property type="match status" value="1"/>
</dbReference>
<dbReference type="PROSITE" id="PS00996">
    <property type="entry name" value="RIBOSOMAL_S21E"/>
    <property type="match status" value="1"/>
</dbReference>
<reference key="1">
    <citation type="submission" date="2005-06" db="EMBL/GenBank/DDBJ databases">
        <title>Ribosomal proteins of Coleoptera.</title>
        <authorList>
            <person name="Longhorn S.J."/>
            <person name="Vogler A.P."/>
        </authorList>
    </citation>
    <scope>NUCLEOTIDE SEQUENCE [MRNA]</scope>
</reference>
<feature type="chain" id="PRO_0000194739" description="Small ribosomal subunit protein eS21">
    <location>
        <begin position="1"/>
        <end position="83"/>
    </location>
</feature>
<keyword id="KW-0963">Cytoplasm</keyword>
<keyword id="KW-0256">Endoplasmic reticulum</keyword>
<keyword id="KW-0687">Ribonucleoprotein</keyword>
<keyword id="KW-0689">Ribosomal protein</keyword>
<gene>
    <name type="primary">RpS21</name>
</gene>
<proteinExistence type="inferred from homology"/>
<organism>
    <name type="scientific">Agriotes lineatus</name>
    <name type="common">Lined click beetle</name>
    <dbReference type="NCBI Taxonomy" id="292458"/>
    <lineage>
        <taxon>Eukaryota</taxon>
        <taxon>Metazoa</taxon>
        <taxon>Ecdysozoa</taxon>
        <taxon>Arthropoda</taxon>
        <taxon>Hexapoda</taxon>
        <taxon>Insecta</taxon>
        <taxon>Pterygota</taxon>
        <taxon>Neoptera</taxon>
        <taxon>Endopterygota</taxon>
        <taxon>Coleoptera</taxon>
        <taxon>Polyphaga</taxon>
        <taxon>Elateriformia</taxon>
        <taxon>Elateroidea</taxon>
        <taxon>Elateridae</taxon>
        <taxon>Elaterinae</taxon>
        <taxon>Agriotes</taxon>
    </lineage>
</organism>
<protein>
    <recommendedName>
        <fullName evidence="4">Small ribosomal subunit protein eS21</fullName>
    </recommendedName>
    <alternativeName>
        <fullName>40S ribosomal protein S21</fullName>
    </alternativeName>
</protein>
<sequence>MENDAGEFVDLYCPRKCSASNRIIHAKDHASIQLSIAEVVPATGRMTENTKSYALCGAIRRMGESDDCIVRLTKKDGILTKNF</sequence>
<name>RS21_AGRLI</name>
<accession>Q4GXP3</accession>